<gene>
    <name evidence="1" type="primary">argB</name>
    <name type="ordered locus">ECSE_4252</name>
</gene>
<keyword id="KW-0028">Amino-acid biosynthesis</keyword>
<keyword id="KW-0055">Arginine biosynthesis</keyword>
<keyword id="KW-0067">ATP-binding</keyword>
<keyword id="KW-0963">Cytoplasm</keyword>
<keyword id="KW-0418">Kinase</keyword>
<keyword id="KW-0547">Nucleotide-binding</keyword>
<keyword id="KW-0808">Transferase</keyword>
<accession>B6I5H5</accession>
<dbReference type="EC" id="2.7.2.8" evidence="1"/>
<dbReference type="EMBL" id="AP009240">
    <property type="protein sequence ID" value="BAG79776.1"/>
    <property type="molecule type" value="Genomic_DNA"/>
</dbReference>
<dbReference type="SMR" id="B6I5H5"/>
<dbReference type="KEGG" id="ecy:ECSE_4252"/>
<dbReference type="HOGENOM" id="CLU_053680_1_1_6"/>
<dbReference type="UniPathway" id="UPA00068">
    <property type="reaction ID" value="UER00107"/>
</dbReference>
<dbReference type="Proteomes" id="UP000008199">
    <property type="component" value="Chromosome"/>
</dbReference>
<dbReference type="GO" id="GO:0005737">
    <property type="term" value="C:cytoplasm"/>
    <property type="evidence" value="ECO:0007669"/>
    <property type="project" value="UniProtKB-SubCell"/>
</dbReference>
<dbReference type="GO" id="GO:0003991">
    <property type="term" value="F:acetylglutamate kinase activity"/>
    <property type="evidence" value="ECO:0007669"/>
    <property type="project" value="UniProtKB-UniRule"/>
</dbReference>
<dbReference type="GO" id="GO:0005524">
    <property type="term" value="F:ATP binding"/>
    <property type="evidence" value="ECO:0007669"/>
    <property type="project" value="UniProtKB-UniRule"/>
</dbReference>
<dbReference type="GO" id="GO:0042450">
    <property type="term" value="P:arginine biosynthetic process via ornithine"/>
    <property type="evidence" value="ECO:0007669"/>
    <property type="project" value="UniProtKB-UniRule"/>
</dbReference>
<dbReference type="GO" id="GO:0006526">
    <property type="term" value="P:L-arginine biosynthetic process"/>
    <property type="evidence" value="ECO:0007669"/>
    <property type="project" value="UniProtKB-UniPathway"/>
</dbReference>
<dbReference type="CDD" id="cd04249">
    <property type="entry name" value="AAK_NAGK-NC"/>
    <property type="match status" value="1"/>
</dbReference>
<dbReference type="FunFam" id="3.40.1160.10:FF:000008">
    <property type="entry name" value="Acetylglutamate kinase"/>
    <property type="match status" value="1"/>
</dbReference>
<dbReference type="Gene3D" id="3.40.1160.10">
    <property type="entry name" value="Acetylglutamate kinase-like"/>
    <property type="match status" value="1"/>
</dbReference>
<dbReference type="HAMAP" id="MF_00082">
    <property type="entry name" value="ArgB"/>
    <property type="match status" value="1"/>
</dbReference>
<dbReference type="InterPro" id="IPR036393">
    <property type="entry name" value="AceGlu_kinase-like_sf"/>
</dbReference>
<dbReference type="InterPro" id="IPR004662">
    <property type="entry name" value="AcgluKinase_fam"/>
</dbReference>
<dbReference type="InterPro" id="IPR037528">
    <property type="entry name" value="ArgB"/>
</dbReference>
<dbReference type="InterPro" id="IPR001048">
    <property type="entry name" value="Asp/Glu/Uridylate_kinase"/>
</dbReference>
<dbReference type="InterPro" id="IPR041731">
    <property type="entry name" value="NAGK-NC"/>
</dbReference>
<dbReference type="NCBIfam" id="TIGR00761">
    <property type="entry name" value="argB"/>
    <property type="match status" value="1"/>
</dbReference>
<dbReference type="PANTHER" id="PTHR23342">
    <property type="entry name" value="N-ACETYLGLUTAMATE SYNTHASE"/>
    <property type="match status" value="1"/>
</dbReference>
<dbReference type="PANTHER" id="PTHR23342:SF0">
    <property type="entry name" value="N-ACETYLGLUTAMATE SYNTHASE, MITOCHONDRIAL"/>
    <property type="match status" value="1"/>
</dbReference>
<dbReference type="Pfam" id="PF00696">
    <property type="entry name" value="AA_kinase"/>
    <property type="match status" value="1"/>
</dbReference>
<dbReference type="PIRSF" id="PIRSF000728">
    <property type="entry name" value="NAGK"/>
    <property type="match status" value="1"/>
</dbReference>
<dbReference type="SUPFAM" id="SSF53633">
    <property type="entry name" value="Carbamate kinase-like"/>
    <property type="match status" value="1"/>
</dbReference>
<reference key="1">
    <citation type="journal article" date="2008" name="DNA Res.">
        <title>Complete genome sequence and comparative analysis of the wild-type commensal Escherichia coli strain SE11 isolated from a healthy adult.</title>
        <authorList>
            <person name="Oshima K."/>
            <person name="Toh H."/>
            <person name="Ogura Y."/>
            <person name="Sasamoto H."/>
            <person name="Morita H."/>
            <person name="Park S.-H."/>
            <person name="Ooka T."/>
            <person name="Iyoda S."/>
            <person name="Taylor T.D."/>
            <person name="Hayashi T."/>
            <person name="Itoh K."/>
            <person name="Hattori M."/>
        </authorList>
    </citation>
    <scope>NUCLEOTIDE SEQUENCE [LARGE SCALE GENOMIC DNA]</scope>
    <source>
        <strain>SE11</strain>
    </source>
</reference>
<sequence>MNPLIIKLGGVLLDSEEALERLFSALVNYRESHQRPLVIVHGGGCVVDELMKGLNLPVKKKNGLRVTPADQIDIITGALAGTANKTLLAWAKKHQIAAVGLFLGDGDSVKVTQLDEELGHVGLAQPGSPKLINSLLENGYLPVVSSIGVTDEGQLMNVNADQAATALAATLGADLILLSDVSGILDGKGQRIAEMTAAKAEQLIEQGIITDGMIVKVNAALDAARTLGRPVDIASWRHAEQLPALFNGMPMGTRILA</sequence>
<evidence type="ECO:0000255" key="1">
    <source>
        <dbReference type="HAMAP-Rule" id="MF_00082"/>
    </source>
</evidence>
<comment type="function">
    <text evidence="1">Catalyzes the ATP-dependent phosphorylation of N-acetyl-L-glutamate.</text>
</comment>
<comment type="catalytic activity">
    <reaction evidence="1">
        <text>N-acetyl-L-glutamate + ATP = N-acetyl-L-glutamyl 5-phosphate + ADP</text>
        <dbReference type="Rhea" id="RHEA:14629"/>
        <dbReference type="ChEBI" id="CHEBI:30616"/>
        <dbReference type="ChEBI" id="CHEBI:44337"/>
        <dbReference type="ChEBI" id="CHEBI:57936"/>
        <dbReference type="ChEBI" id="CHEBI:456216"/>
        <dbReference type="EC" id="2.7.2.8"/>
    </reaction>
</comment>
<comment type="pathway">
    <text evidence="1">Amino-acid biosynthesis; L-arginine biosynthesis; N(2)-acetyl-L-ornithine from L-glutamate: step 2/4.</text>
</comment>
<comment type="subunit">
    <text evidence="1">Homodimer.</text>
</comment>
<comment type="subcellular location">
    <subcellularLocation>
        <location evidence="1">Cytoplasm</location>
    </subcellularLocation>
</comment>
<comment type="similarity">
    <text evidence="1">Belongs to the acetylglutamate kinase family. ArgB subfamily.</text>
</comment>
<name>ARGB_ECOSE</name>
<protein>
    <recommendedName>
        <fullName evidence="1">Acetylglutamate kinase</fullName>
        <ecNumber evidence="1">2.7.2.8</ecNumber>
    </recommendedName>
    <alternativeName>
        <fullName evidence="1">N-acetyl-L-glutamate 5-phosphotransferase</fullName>
    </alternativeName>
    <alternativeName>
        <fullName evidence="1">NAG kinase</fullName>
        <shortName evidence="1">NAGK</shortName>
    </alternativeName>
</protein>
<organism>
    <name type="scientific">Escherichia coli (strain SE11)</name>
    <dbReference type="NCBI Taxonomy" id="409438"/>
    <lineage>
        <taxon>Bacteria</taxon>
        <taxon>Pseudomonadati</taxon>
        <taxon>Pseudomonadota</taxon>
        <taxon>Gammaproteobacteria</taxon>
        <taxon>Enterobacterales</taxon>
        <taxon>Enterobacteriaceae</taxon>
        <taxon>Escherichia</taxon>
    </lineage>
</organism>
<proteinExistence type="inferred from homology"/>
<feature type="chain" id="PRO_1000092858" description="Acetylglutamate kinase">
    <location>
        <begin position="1"/>
        <end position="257"/>
    </location>
</feature>
<feature type="binding site" evidence="1">
    <location>
        <begin position="43"/>
        <end position="44"/>
    </location>
    <ligand>
        <name>substrate</name>
    </ligand>
</feature>
<feature type="binding site" evidence="1">
    <location>
        <position position="65"/>
    </location>
    <ligand>
        <name>substrate</name>
    </ligand>
</feature>
<feature type="binding site" evidence="1">
    <location>
        <position position="157"/>
    </location>
    <ligand>
        <name>substrate</name>
    </ligand>
</feature>
<feature type="binding site" evidence="1">
    <location>
        <begin position="180"/>
        <end position="185"/>
    </location>
    <ligand>
        <name>ATP</name>
        <dbReference type="ChEBI" id="CHEBI:30616"/>
    </ligand>
</feature>
<feature type="binding site" evidence="1">
    <location>
        <begin position="208"/>
        <end position="210"/>
    </location>
    <ligand>
        <name>ATP</name>
        <dbReference type="ChEBI" id="CHEBI:30616"/>
    </ligand>
</feature>
<feature type="site" description="Transition state stabilizer" evidence="1">
    <location>
        <position position="7"/>
    </location>
</feature>
<feature type="site" description="Transition state stabilizer" evidence="1">
    <location>
        <position position="216"/>
    </location>
</feature>